<proteinExistence type="inferred from homology"/>
<accession>Q3BPS1</accession>
<protein>
    <recommendedName>
        <fullName evidence="1">DNA-directed RNA polymerase subunit omega</fullName>
        <shortName evidence="1">RNAP omega subunit</shortName>
        <ecNumber evidence="1">2.7.7.6</ecNumber>
    </recommendedName>
    <alternativeName>
        <fullName evidence="1">RNA polymerase omega subunit</fullName>
    </alternativeName>
    <alternativeName>
        <fullName evidence="1">Transcriptase subunit omega</fullName>
    </alternativeName>
</protein>
<sequence>MARITVEDCLEVVNNRFELVMMASKRARQLANGVQPLIENADASDKPTVMALREIAARRIDNALIDEVEKAERERAEREALEWAAAEVVADEDMSKNDD</sequence>
<keyword id="KW-0240">DNA-directed RNA polymerase</keyword>
<keyword id="KW-0548">Nucleotidyltransferase</keyword>
<keyword id="KW-0804">Transcription</keyword>
<keyword id="KW-0808">Transferase</keyword>
<dbReference type="EC" id="2.7.7.6" evidence="1"/>
<dbReference type="EMBL" id="AM039952">
    <property type="protein sequence ID" value="CAJ25242.1"/>
    <property type="molecule type" value="Genomic_DNA"/>
</dbReference>
<dbReference type="RefSeq" id="WP_002812428.1">
    <property type="nucleotide sequence ID" value="NZ_CP017190.1"/>
</dbReference>
<dbReference type="SMR" id="Q3BPS1"/>
<dbReference type="STRING" id="456327.BJD11_05185"/>
<dbReference type="GeneID" id="97511588"/>
<dbReference type="KEGG" id="xcv:XCV3511"/>
<dbReference type="eggNOG" id="COG1758">
    <property type="taxonomic scope" value="Bacteria"/>
</dbReference>
<dbReference type="HOGENOM" id="CLU_125406_5_3_6"/>
<dbReference type="Proteomes" id="UP000007069">
    <property type="component" value="Chromosome"/>
</dbReference>
<dbReference type="GO" id="GO:0000428">
    <property type="term" value="C:DNA-directed RNA polymerase complex"/>
    <property type="evidence" value="ECO:0007669"/>
    <property type="project" value="UniProtKB-KW"/>
</dbReference>
<dbReference type="GO" id="GO:0003677">
    <property type="term" value="F:DNA binding"/>
    <property type="evidence" value="ECO:0007669"/>
    <property type="project" value="UniProtKB-UniRule"/>
</dbReference>
<dbReference type="GO" id="GO:0003899">
    <property type="term" value="F:DNA-directed RNA polymerase activity"/>
    <property type="evidence" value="ECO:0007669"/>
    <property type="project" value="UniProtKB-UniRule"/>
</dbReference>
<dbReference type="GO" id="GO:0006351">
    <property type="term" value="P:DNA-templated transcription"/>
    <property type="evidence" value="ECO:0007669"/>
    <property type="project" value="UniProtKB-UniRule"/>
</dbReference>
<dbReference type="Gene3D" id="3.90.940.10">
    <property type="match status" value="1"/>
</dbReference>
<dbReference type="HAMAP" id="MF_00366">
    <property type="entry name" value="RNApol_bact_RpoZ"/>
    <property type="match status" value="1"/>
</dbReference>
<dbReference type="InterPro" id="IPR003716">
    <property type="entry name" value="DNA-dir_RNA_pol_omega"/>
</dbReference>
<dbReference type="InterPro" id="IPR006110">
    <property type="entry name" value="Pol_omega/Rpo6/RPB6"/>
</dbReference>
<dbReference type="InterPro" id="IPR036161">
    <property type="entry name" value="RPB6/omega-like_sf"/>
</dbReference>
<dbReference type="NCBIfam" id="TIGR00690">
    <property type="entry name" value="rpoZ"/>
    <property type="match status" value="1"/>
</dbReference>
<dbReference type="PANTHER" id="PTHR34476">
    <property type="entry name" value="DNA-DIRECTED RNA POLYMERASE SUBUNIT OMEGA"/>
    <property type="match status" value="1"/>
</dbReference>
<dbReference type="PANTHER" id="PTHR34476:SF1">
    <property type="entry name" value="DNA-DIRECTED RNA POLYMERASE SUBUNIT OMEGA"/>
    <property type="match status" value="1"/>
</dbReference>
<dbReference type="Pfam" id="PF01192">
    <property type="entry name" value="RNA_pol_Rpb6"/>
    <property type="match status" value="1"/>
</dbReference>
<dbReference type="SMART" id="SM01409">
    <property type="entry name" value="RNA_pol_Rpb6"/>
    <property type="match status" value="1"/>
</dbReference>
<dbReference type="SUPFAM" id="SSF63562">
    <property type="entry name" value="RPB6/omega subunit-like"/>
    <property type="match status" value="1"/>
</dbReference>
<comment type="function">
    <text evidence="1">Promotes RNA polymerase assembly. Latches the N- and C-terminal regions of the beta' subunit thereby facilitating its interaction with the beta and alpha subunits.</text>
</comment>
<comment type="catalytic activity">
    <reaction evidence="1">
        <text>RNA(n) + a ribonucleoside 5'-triphosphate = RNA(n+1) + diphosphate</text>
        <dbReference type="Rhea" id="RHEA:21248"/>
        <dbReference type="Rhea" id="RHEA-COMP:14527"/>
        <dbReference type="Rhea" id="RHEA-COMP:17342"/>
        <dbReference type="ChEBI" id="CHEBI:33019"/>
        <dbReference type="ChEBI" id="CHEBI:61557"/>
        <dbReference type="ChEBI" id="CHEBI:140395"/>
        <dbReference type="EC" id="2.7.7.6"/>
    </reaction>
</comment>
<comment type="subunit">
    <text evidence="1">The RNAP catalytic core consists of 2 alpha, 1 beta, 1 beta' and 1 omega subunit. When a sigma factor is associated with the core the holoenzyme is formed, which can initiate transcription.</text>
</comment>
<comment type="similarity">
    <text evidence="1">Belongs to the RNA polymerase subunit omega family.</text>
</comment>
<reference key="1">
    <citation type="journal article" date="2005" name="J. Bacteriol.">
        <title>Insights into genome plasticity and pathogenicity of the plant pathogenic Bacterium Xanthomonas campestris pv. vesicatoria revealed by the complete genome sequence.</title>
        <authorList>
            <person name="Thieme F."/>
            <person name="Koebnik R."/>
            <person name="Bekel T."/>
            <person name="Berger C."/>
            <person name="Boch J."/>
            <person name="Buettner D."/>
            <person name="Caldana C."/>
            <person name="Gaigalat L."/>
            <person name="Goesmann A."/>
            <person name="Kay S."/>
            <person name="Kirchner O."/>
            <person name="Lanz C."/>
            <person name="Linke B."/>
            <person name="McHardy A.C."/>
            <person name="Meyer F."/>
            <person name="Mittenhuber G."/>
            <person name="Nies D.H."/>
            <person name="Niesbach-Kloesgen U."/>
            <person name="Patschkowski T."/>
            <person name="Rueckert C."/>
            <person name="Rupp O."/>
            <person name="Schneiker S."/>
            <person name="Schuster S.C."/>
            <person name="Vorhoelter F.J."/>
            <person name="Weber E."/>
            <person name="Puehler A."/>
            <person name="Bonas U."/>
            <person name="Bartels D."/>
            <person name="Kaiser O."/>
        </authorList>
    </citation>
    <scope>NUCLEOTIDE SEQUENCE [LARGE SCALE GENOMIC DNA]</scope>
    <source>
        <strain>85-10</strain>
    </source>
</reference>
<gene>
    <name evidence="1" type="primary">rpoZ</name>
    <name type="ordered locus">XCV3511</name>
</gene>
<organism>
    <name type="scientific">Xanthomonas euvesicatoria pv. vesicatoria (strain 85-10)</name>
    <name type="common">Xanthomonas campestris pv. vesicatoria</name>
    <dbReference type="NCBI Taxonomy" id="316273"/>
    <lineage>
        <taxon>Bacteria</taxon>
        <taxon>Pseudomonadati</taxon>
        <taxon>Pseudomonadota</taxon>
        <taxon>Gammaproteobacteria</taxon>
        <taxon>Lysobacterales</taxon>
        <taxon>Lysobacteraceae</taxon>
        <taxon>Xanthomonas</taxon>
    </lineage>
</organism>
<feature type="chain" id="PRO_0000237531" description="DNA-directed RNA polymerase subunit omega">
    <location>
        <begin position="1"/>
        <end position="99"/>
    </location>
</feature>
<evidence type="ECO:0000255" key="1">
    <source>
        <dbReference type="HAMAP-Rule" id="MF_00366"/>
    </source>
</evidence>
<name>RPOZ_XANE5</name>